<keyword id="KW-0012">Acyltransferase</keyword>
<keyword id="KW-0963">Cytoplasm</keyword>
<keyword id="KW-0408">Iron</keyword>
<keyword id="KW-0479">Metal-binding</keyword>
<keyword id="KW-1185">Reference proteome</keyword>
<keyword id="KW-0808">Transferase</keyword>
<keyword id="KW-0819">tRNA processing</keyword>
<name>TSAD_ECO55</name>
<comment type="function">
    <text evidence="1">Required for the formation of a threonylcarbamoyl group on adenosine at position 37 (t(6)A37) in tRNAs that read codons beginning with adenine. Is involved in the transfer of the threonylcarbamoyl moiety of threonylcarbamoyl-AMP (TC-AMP) to the N6 group of A37, together with TsaE and TsaB. TsaD likely plays a direct catalytic role in this reaction.</text>
</comment>
<comment type="catalytic activity">
    <reaction evidence="1">
        <text>L-threonylcarbamoyladenylate + adenosine(37) in tRNA = N(6)-L-threonylcarbamoyladenosine(37) in tRNA + AMP + H(+)</text>
        <dbReference type="Rhea" id="RHEA:37059"/>
        <dbReference type="Rhea" id="RHEA-COMP:10162"/>
        <dbReference type="Rhea" id="RHEA-COMP:10163"/>
        <dbReference type="ChEBI" id="CHEBI:15378"/>
        <dbReference type="ChEBI" id="CHEBI:73682"/>
        <dbReference type="ChEBI" id="CHEBI:74411"/>
        <dbReference type="ChEBI" id="CHEBI:74418"/>
        <dbReference type="ChEBI" id="CHEBI:456215"/>
        <dbReference type="EC" id="2.3.1.234"/>
    </reaction>
</comment>
<comment type="cofactor">
    <cofactor evidence="1">
        <name>Fe(2+)</name>
        <dbReference type="ChEBI" id="CHEBI:29033"/>
    </cofactor>
    <text evidence="1">Binds 1 Fe(2+) ion per subunit.</text>
</comment>
<comment type="subcellular location">
    <subcellularLocation>
        <location evidence="1">Cytoplasm</location>
    </subcellularLocation>
</comment>
<comment type="similarity">
    <text evidence="1">Belongs to the KAE1 / TsaD family.</text>
</comment>
<dbReference type="EC" id="2.3.1.234" evidence="1"/>
<dbReference type="EMBL" id="CU928145">
    <property type="protein sequence ID" value="CAU99618.1"/>
    <property type="molecule type" value="Genomic_DNA"/>
</dbReference>
<dbReference type="RefSeq" id="WP_001264365.1">
    <property type="nucleotide sequence ID" value="NC_011748.1"/>
</dbReference>
<dbReference type="SMR" id="B7LGZ9"/>
<dbReference type="GeneID" id="93778929"/>
<dbReference type="KEGG" id="eck:EC55989_3479"/>
<dbReference type="HOGENOM" id="CLU_023208_0_2_6"/>
<dbReference type="Proteomes" id="UP000000746">
    <property type="component" value="Chromosome"/>
</dbReference>
<dbReference type="GO" id="GO:0005737">
    <property type="term" value="C:cytoplasm"/>
    <property type="evidence" value="ECO:0007669"/>
    <property type="project" value="UniProtKB-SubCell"/>
</dbReference>
<dbReference type="GO" id="GO:0005506">
    <property type="term" value="F:iron ion binding"/>
    <property type="evidence" value="ECO:0007669"/>
    <property type="project" value="UniProtKB-UniRule"/>
</dbReference>
<dbReference type="GO" id="GO:0061711">
    <property type="term" value="F:N(6)-L-threonylcarbamoyladenine synthase activity"/>
    <property type="evidence" value="ECO:0007669"/>
    <property type="project" value="UniProtKB-EC"/>
</dbReference>
<dbReference type="GO" id="GO:0002949">
    <property type="term" value="P:tRNA threonylcarbamoyladenosine modification"/>
    <property type="evidence" value="ECO:0007669"/>
    <property type="project" value="UniProtKB-UniRule"/>
</dbReference>
<dbReference type="CDD" id="cd24097">
    <property type="entry name" value="ASKHA_NBD_TsaD-like"/>
    <property type="match status" value="1"/>
</dbReference>
<dbReference type="FunFam" id="3.30.420.40:FF:000031">
    <property type="entry name" value="tRNA N6-adenosine threonylcarbamoyltransferase"/>
    <property type="match status" value="1"/>
</dbReference>
<dbReference type="Gene3D" id="3.30.420.40">
    <property type="match status" value="2"/>
</dbReference>
<dbReference type="HAMAP" id="MF_01445">
    <property type="entry name" value="TsaD"/>
    <property type="match status" value="1"/>
</dbReference>
<dbReference type="InterPro" id="IPR043129">
    <property type="entry name" value="ATPase_NBD"/>
</dbReference>
<dbReference type="InterPro" id="IPR000905">
    <property type="entry name" value="Gcp-like_dom"/>
</dbReference>
<dbReference type="InterPro" id="IPR017861">
    <property type="entry name" value="KAE1/TsaD"/>
</dbReference>
<dbReference type="InterPro" id="IPR017860">
    <property type="entry name" value="Peptidase_M22_CS"/>
</dbReference>
<dbReference type="InterPro" id="IPR022450">
    <property type="entry name" value="TsaD"/>
</dbReference>
<dbReference type="NCBIfam" id="TIGR00329">
    <property type="entry name" value="gcp_kae1"/>
    <property type="match status" value="1"/>
</dbReference>
<dbReference type="NCBIfam" id="TIGR03723">
    <property type="entry name" value="T6A_TsaD_YgjD"/>
    <property type="match status" value="1"/>
</dbReference>
<dbReference type="PANTHER" id="PTHR11735">
    <property type="entry name" value="TRNA N6-ADENOSINE THREONYLCARBAMOYLTRANSFERASE"/>
    <property type="match status" value="1"/>
</dbReference>
<dbReference type="PANTHER" id="PTHR11735:SF6">
    <property type="entry name" value="TRNA N6-ADENOSINE THREONYLCARBAMOYLTRANSFERASE, MITOCHONDRIAL"/>
    <property type="match status" value="1"/>
</dbReference>
<dbReference type="Pfam" id="PF00814">
    <property type="entry name" value="TsaD"/>
    <property type="match status" value="1"/>
</dbReference>
<dbReference type="PRINTS" id="PR00789">
    <property type="entry name" value="OSIALOPTASE"/>
</dbReference>
<dbReference type="SUPFAM" id="SSF53067">
    <property type="entry name" value="Actin-like ATPase domain"/>
    <property type="match status" value="1"/>
</dbReference>
<dbReference type="PROSITE" id="PS01016">
    <property type="entry name" value="GLYCOPROTEASE"/>
    <property type="match status" value="1"/>
</dbReference>
<proteinExistence type="inferred from homology"/>
<protein>
    <recommendedName>
        <fullName evidence="1">tRNA N6-adenosine threonylcarbamoyltransferase</fullName>
        <ecNumber evidence="1">2.3.1.234</ecNumber>
    </recommendedName>
    <alternativeName>
        <fullName evidence="1">N6-L-threonylcarbamoyladenine synthase</fullName>
        <shortName evidence="1">t(6)A synthase</shortName>
    </alternativeName>
    <alternativeName>
        <fullName evidence="1">t(6)A37 threonylcarbamoyladenosine biosynthesis protein TsaD</fullName>
    </alternativeName>
    <alternativeName>
        <fullName evidence="1">tRNA threonylcarbamoyladenosine biosynthesis protein TsaD</fullName>
    </alternativeName>
</protein>
<feature type="chain" id="PRO_1000184964" description="tRNA N6-adenosine threonylcarbamoyltransferase">
    <location>
        <begin position="1"/>
        <end position="337"/>
    </location>
</feature>
<feature type="binding site" evidence="1">
    <location>
        <position position="111"/>
    </location>
    <ligand>
        <name>Fe cation</name>
        <dbReference type="ChEBI" id="CHEBI:24875"/>
    </ligand>
</feature>
<feature type="binding site" evidence="1">
    <location>
        <position position="115"/>
    </location>
    <ligand>
        <name>Fe cation</name>
        <dbReference type="ChEBI" id="CHEBI:24875"/>
    </ligand>
</feature>
<feature type="binding site" evidence="1">
    <location>
        <begin position="134"/>
        <end position="138"/>
    </location>
    <ligand>
        <name>substrate</name>
    </ligand>
</feature>
<feature type="binding site" evidence="1">
    <location>
        <position position="167"/>
    </location>
    <ligand>
        <name>substrate</name>
    </ligand>
</feature>
<feature type="binding site" evidence="1">
    <location>
        <position position="180"/>
    </location>
    <ligand>
        <name>substrate</name>
    </ligand>
</feature>
<feature type="binding site" evidence="1">
    <location>
        <position position="272"/>
    </location>
    <ligand>
        <name>substrate</name>
    </ligand>
</feature>
<feature type="binding site" evidence="1">
    <location>
        <position position="300"/>
    </location>
    <ligand>
        <name>Fe cation</name>
        <dbReference type="ChEBI" id="CHEBI:24875"/>
    </ligand>
</feature>
<sequence>MRVLGIETSCDETGIAIYDDEKGLLANQLYSQVKLHADYGGVVPELASRDHVRKTVPLIQAALKESGLTAKDIDAVAYTAGPGLVGALLVGATVGRSLAFAWNVPAIPVHHMEGHLLAPMLEDNPPEFPFVALLVSGGHTQLISVTGIGQYELLGESIDDAAGEAFDKTAKLLGLDYPGGPLLSKMAAQGTAGRFVFPRPMTDRPGLDFSFSGLKTFAANTIRDNGTDDQTRADIARAFEDAVVDTLMIKCKRALDQTGFKRLVMAGGVSANRTLRAKLAEMMKKRRGEVFYARPEFCTDNGAMIAYAGMVRFKAGATADLGVSVRPRWPLAELPAA</sequence>
<organism>
    <name type="scientific">Escherichia coli (strain 55989 / EAEC)</name>
    <dbReference type="NCBI Taxonomy" id="585055"/>
    <lineage>
        <taxon>Bacteria</taxon>
        <taxon>Pseudomonadati</taxon>
        <taxon>Pseudomonadota</taxon>
        <taxon>Gammaproteobacteria</taxon>
        <taxon>Enterobacterales</taxon>
        <taxon>Enterobacteriaceae</taxon>
        <taxon>Escherichia</taxon>
    </lineage>
</organism>
<accession>B7LGZ9</accession>
<reference key="1">
    <citation type="journal article" date="2009" name="PLoS Genet.">
        <title>Organised genome dynamics in the Escherichia coli species results in highly diverse adaptive paths.</title>
        <authorList>
            <person name="Touchon M."/>
            <person name="Hoede C."/>
            <person name="Tenaillon O."/>
            <person name="Barbe V."/>
            <person name="Baeriswyl S."/>
            <person name="Bidet P."/>
            <person name="Bingen E."/>
            <person name="Bonacorsi S."/>
            <person name="Bouchier C."/>
            <person name="Bouvet O."/>
            <person name="Calteau A."/>
            <person name="Chiapello H."/>
            <person name="Clermont O."/>
            <person name="Cruveiller S."/>
            <person name="Danchin A."/>
            <person name="Diard M."/>
            <person name="Dossat C."/>
            <person name="Karoui M.E."/>
            <person name="Frapy E."/>
            <person name="Garry L."/>
            <person name="Ghigo J.M."/>
            <person name="Gilles A.M."/>
            <person name="Johnson J."/>
            <person name="Le Bouguenec C."/>
            <person name="Lescat M."/>
            <person name="Mangenot S."/>
            <person name="Martinez-Jehanne V."/>
            <person name="Matic I."/>
            <person name="Nassif X."/>
            <person name="Oztas S."/>
            <person name="Petit M.A."/>
            <person name="Pichon C."/>
            <person name="Rouy Z."/>
            <person name="Ruf C.S."/>
            <person name="Schneider D."/>
            <person name="Tourret J."/>
            <person name="Vacherie B."/>
            <person name="Vallenet D."/>
            <person name="Medigue C."/>
            <person name="Rocha E.P.C."/>
            <person name="Denamur E."/>
        </authorList>
    </citation>
    <scope>NUCLEOTIDE SEQUENCE [LARGE SCALE GENOMIC DNA]</scope>
    <source>
        <strain>55989 / EAEC</strain>
    </source>
</reference>
<evidence type="ECO:0000255" key="1">
    <source>
        <dbReference type="HAMAP-Rule" id="MF_01445"/>
    </source>
</evidence>
<gene>
    <name evidence="1" type="primary">tsaD</name>
    <name type="synonym">gcp</name>
    <name type="ordered locus">EC55989_3479</name>
</gene>